<keyword id="KW-0143">Chaperone</keyword>
<keyword id="KW-0963">Cytoplasm</keyword>
<keyword id="KW-1015">Disulfide bond</keyword>
<keyword id="KW-0676">Redox-active center</keyword>
<keyword id="KW-1185">Reference proteome</keyword>
<keyword id="KW-0862">Zinc</keyword>
<protein>
    <recommendedName>
        <fullName evidence="1">33 kDa chaperonin</fullName>
    </recommendedName>
    <alternativeName>
        <fullName evidence="1">Heat shock protein 33 homolog</fullName>
        <shortName evidence="1">HSP33</shortName>
    </alternativeName>
</protein>
<name>HSLO_PROM0</name>
<reference key="1">
    <citation type="journal article" date="2007" name="PLoS Genet.">
        <title>Patterns and implications of gene gain and loss in the evolution of Prochlorococcus.</title>
        <authorList>
            <person name="Kettler G.C."/>
            <person name="Martiny A.C."/>
            <person name="Huang K."/>
            <person name="Zucker J."/>
            <person name="Coleman M.L."/>
            <person name="Rodrigue S."/>
            <person name="Chen F."/>
            <person name="Lapidus A."/>
            <person name="Ferriera S."/>
            <person name="Johnson J."/>
            <person name="Steglich C."/>
            <person name="Church G.M."/>
            <person name="Richardson P."/>
            <person name="Chisholm S.W."/>
        </authorList>
    </citation>
    <scope>NUCLEOTIDE SEQUENCE [LARGE SCALE GENOMIC DNA]</scope>
    <source>
        <strain>MIT 9301</strain>
    </source>
</reference>
<organism>
    <name type="scientific">Prochlorococcus marinus (strain MIT 9301)</name>
    <dbReference type="NCBI Taxonomy" id="167546"/>
    <lineage>
        <taxon>Bacteria</taxon>
        <taxon>Bacillati</taxon>
        <taxon>Cyanobacteriota</taxon>
        <taxon>Cyanophyceae</taxon>
        <taxon>Synechococcales</taxon>
        <taxon>Prochlorococcaceae</taxon>
        <taxon>Prochlorococcus</taxon>
    </lineage>
</organism>
<comment type="function">
    <text evidence="1">Redox regulated molecular chaperone. Protects both thermally unfolding and oxidatively damaged proteins from irreversible aggregation. Plays an important role in the bacterial defense system toward oxidative stress.</text>
</comment>
<comment type="subcellular location">
    <subcellularLocation>
        <location evidence="1">Cytoplasm</location>
    </subcellularLocation>
</comment>
<comment type="PTM">
    <text evidence="1">Under oxidizing conditions two disulfide bonds are formed involving the reactive cysteines. Under reducing conditions zinc is bound to the reactive cysteines and the protein is inactive.</text>
</comment>
<comment type="similarity">
    <text evidence="1">Belongs to the HSP33 family.</text>
</comment>
<dbReference type="EMBL" id="CP000576">
    <property type="protein sequence ID" value="ABO17341.1"/>
    <property type="molecule type" value="Genomic_DNA"/>
</dbReference>
<dbReference type="RefSeq" id="WP_011862706.1">
    <property type="nucleotide sequence ID" value="NC_009091.1"/>
</dbReference>
<dbReference type="SMR" id="A3PC66"/>
<dbReference type="STRING" id="167546.P9301_07181"/>
<dbReference type="KEGG" id="pmg:P9301_07181"/>
<dbReference type="eggNOG" id="COG1281">
    <property type="taxonomic scope" value="Bacteria"/>
</dbReference>
<dbReference type="HOGENOM" id="CLU_054493_1_0_3"/>
<dbReference type="OrthoDB" id="9776534at2"/>
<dbReference type="Proteomes" id="UP000001430">
    <property type="component" value="Chromosome"/>
</dbReference>
<dbReference type="GO" id="GO:0005737">
    <property type="term" value="C:cytoplasm"/>
    <property type="evidence" value="ECO:0007669"/>
    <property type="project" value="UniProtKB-SubCell"/>
</dbReference>
<dbReference type="GO" id="GO:0044183">
    <property type="term" value="F:protein folding chaperone"/>
    <property type="evidence" value="ECO:0007669"/>
    <property type="project" value="TreeGrafter"/>
</dbReference>
<dbReference type="GO" id="GO:0051082">
    <property type="term" value="F:unfolded protein binding"/>
    <property type="evidence" value="ECO:0007669"/>
    <property type="project" value="UniProtKB-UniRule"/>
</dbReference>
<dbReference type="GO" id="GO:0042026">
    <property type="term" value="P:protein refolding"/>
    <property type="evidence" value="ECO:0007669"/>
    <property type="project" value="TreeGrafter"/>
</dbReference>
<dbReference type="CDD" id="cd00498">
    <property type="entry name" value="Hsp33"/>
    <property type="match status" value="1"/>
</dbReference>
<dbReference type="Gene3D" id="3.55.30.10">
    <property type="entry name" value="Hsp33 domain"/>
    <property type="match status" value="1"/>
</dbReference>
<dbReference type="Gene3D" id="3.90.1280.10">
    <property type="entry name" value="HSP33 redox switch-like"/>
    <property type="match status" value="1"/>
</dbReference>
<dbReference type="HAMAP" id="MF_00117">
    <property type="entry name" value="HslO"/>
    <property type="match status" value="1"/>
</dbReference>
<dbReference type="InterPro" id="IPR000397">
    <property type="entry name" value="Heat_shock_Hsp33"/>
</dbReference>
<dbReference type="InterPro" id="IPR016154">
    <property type="entry name" value="Heat_shock_Hsp33_C"/>
</dbReference>
<dbReference type="InterPro" id="IPR016153">
    <property type="entry name" value="Heat_shock_Hsp33_N"/>
</dbReference>
<dbReference type="NCBIfam" id="NF001033">
    <property type="entry name" value="PRK00114.1"/>
    <property type="match status" value="1"/>
</dbReference>
<dbReference type="PANTHER" id="PTHR30111">
    <property type="entry name" value="33 KDA CHAPERONIN"/>
    <property type="match status" value="1"/>
</dbReference>
<dbReference type="PANTHER" id="PTHR30111:SF1">
    <property type="entry name" value="33 KDA CHAPERONIN"/>
    <property type="match status" value="1"/>
</dbReference>
<dbReference type="Pfam" id="PF01430">
    <property type="entry name" value="HSP33"/>
    <property type="match status" value="1"/>
</dbReference>
<dbReference type="PIRSF" id="PIRSF005261">
    <property type="entry name" value="Heat_shock_Hsp33"/>
    <property type="match status" value="1"/>
</dbReference>
<dbReference type="SUPFAM" id="SSF64397">
    <property type="entry name" value="Hsp33 domain"/>
    <property type="match status" value="1"/>
</dbReference>
<dbReference type="SUPFAM" id="SSF118352">
    <property type="entry name" value="HSP33 redox switch-like"/>
    <property type="match status" value="1"/>
</dbReference>
<proteinExistence type="inferred from homology"/>
<accession>A3PC66</accession>
<sequence length="302" mass="33457">MQDRIVRATAANGGIRLVAVLTTESSLEAKKRHDLSYLTTCILGRAFSASLLLASSMKIMHGRVTLRVRSDGPLKGLLVDAGRDGKVRGYVGNPDLELDLVKIDSNKYSFDFTKALGTGYLNVIRDSGIGEPFTSTVELVNGNIAEDLASYLYHSEQTPSAVFIGEKIQNQGIICSGGLLAQVLPKKDTDPLLVSLLEERCKEVNSFSEDLFQSKDNLLSLIKKIFPDIDDESISEKARSQEVSFKCKCSKQRSLNAMNMLDKSELEDILKKDGNAELVCEFCKNKYLINYEEIKLMIENQS</sequence>
<feature type="chain" id="PRO_1000015554" description="33 kDa chaperonin">
    <location>
        <begin position="1"/>
        <end position="302"/>
    </location>
</feature>
<feature type="disulfide bond" description="Redox-active" evidence="1">
    <location>
        <begin position="247"/>
        <end position="249"/>
    </location>
</feature>
<feature type="disulfide bond" description="Redox-active" evidence="1">
    <location>
        <begin position="280"/>
        <end position="283"/>
    </location>
</feature>
<gene>
    <name evidence="1" type="primary">hslO</name>
    <name type="ordered locus">P9301_07181</name>
</gene>
<evidence type="ECO:0000255" key="1">
    <source>
        <dbReference type="HAMAP-Rule" id="MF_00117"/>
    </source>
</evidence>